<comment type="function">
    <text evidence="1">May play a role in the development of hepatic metastases from colorectal cancers.</text>
</comment>
<comment type="subunit">
    <text evidence="1 2">Binds to carcinoembryonic antigen (CEA).</text>
</comment>
<comment type="subcellular location">
    <subcellularLocation>
        <location evidence="2">Cell membrane</location>
    </subcellularLocation>
</comment>
<comment type="PTM">
    <text evidence="2">The N-terminus is blocked.</text>
</comment>
<evidence type="ECO:0000269" key="1">
    <source>
    </source>
</evidence>
<evidence type="ECO:0000269" key="2">
    <source>
    </source>
</evidence>
<evidence type="ECO:0000303" key="3">
    <source>
    </source>
</evidence>
<evidence type="ECO:0000305" key="4"/>
<name>CEAB_RAT</name>
<accession>Q10753</accession>
<dbReference type="PIR" id="S65519">
    <property type="entry name" value="S65519"/>
</dbReference>
<dbReference type="InParanoid" id="Q10753"/>
<dbReference type="Proteomes" id="UP000002494">
    <property type="component" value="Unplaced"/>
</dbReference>
<dbReference type="GO" id="GO:0036038">
    <property type="term" value="C:MKS complex"/>
    <property type="evidence" value="ECO:0000250"/>
    <property type="project" value="UniProtKB"/>
</dbReference>
<dbReference type="GO" id="GO:0005886">
    <property type="term" value="C:plasma membrane"/>
    <property type="evidence" value="ECO:0007669"/>
    <property type="project" value="UniProtKB-SubCell"/>
</dbReference>
<organism>
    <name type="scientific">Rattus norvegicus</name>
    <name type="common">Rat</name>
    <dbReference type="NCBI Taxonomy" id="10116"/>
    <lineage>
        <taxon>Eukaryota</taxon>
        <taxon>Metazoa</taxon>
        <taxon>Chordata</taxon>
        <taxon>Craniata</taxon>
        <taxon>Vertebrata</taxon>
        <taxon>Euteleostomi</taxon>
        <taxon>Mammalia</taxon>
        <taxon>Eutheria</taxon>
        <taxon>Euarchontoglires</taxon>
        <taxon>Glires</taxon>
        <taxon>Rodentia</taxon>
        <taxon>Myomorpha</taxon>
        <taxon>Muroidea</taxon>
        <taxon>Muridae</taxon>
        <taxon>Murinae</taxon>
        <taxon>Rattus</taxon>
    </lineage>
</organism>
<proteinExistence type="evidence at protein level"/>
<protein>
    <recommendedName>
        <fullName>80 kDa carcinoembryonic antigen-binding protein</fullName>
    </recommendedName>
</protein>
<feature type="chain" id="PRO_0000306197" description="80 kDa carcinoembryonic antigen-binding protein">
    <location>
        <begin position="1" status="less than"/>
        <end position="30" status="greater than"/>
    </location>
</feature>
<feature type="non-consecutive residues" evidence="3">
    <location>
        <begin position="18"/>
        <end position="19"/>
    </location>
</feature>
<feature type="non-terminal residue" evidence="3">
    <location>
        <position position="1"/>
    </location>
</feature>
<feature type="non-terminal residue" evidence="3">
    <location>
        <position position="30"/>
    </location>
</feature>
<reference evidence="4" key="1">
    <citation type="journal article" date="1996" name="Arch. Biochem. Biophys.">
        <title>Purification and analysis of an 80-kDa carcinoembryonic antigen-binding protein from Kupffer cells.</title>
        <authorList>
            <person name="Gangopadhyay A."/>
            <person name="Lazure D.A."/>
            <person name="Kelly T.M."/>
            <person name="Thomas P."/>
        </authorList>
    </citation>
    <scope>PROTEIN SEQUENCE</scope>
    <scope>INTERACTION WITH CEA</scope>
    <scope>SUBCELLULAR LOCATION</scope>
    <source>
        <strain evidence="2">Sprague-Dawley</strain>
        <tissue evidence="2">Liver</tissue>
    </source>
</reference>
<reference evidence="4" key="2">
    <citation type="journal article" date="1992" name="Biochem. Biophys. Res. Commun.">
        <title>A peptide sequence on carcinoembryonic antigen binds to a 80kD protein on Kupffer cells.</title>
        <authorList>
            <person name="Thomas P."/>
            <person name="Petrick A.T."/>
            <person name="Toth C.A."/>
            <person name="Fox E.S."/>
            <person name="Elting J.J."/>
            <person name="Steele G. Jr."/>
        </authorList>
    </citation>
    <scope>FUNCTION</scope>
    <scope>INTERACTION WITH CEA</scope>
</reference>
<sequence>PLEALNVQLYNVEVXXTNDKGEADXPGEIQ</sequence>
<keyword id="KW-1003">Cell membrane</keyword>
<keyword id="KW-0903">Direct protein sequencing</keyword>
<keyword id="KW-0472">Membrane</keyword>
<keyword id="KW-1185">Reference proteome</keyword>